<sequence>MIRNGHGEAGGAKRPGPRARRAVRVWCDGCYDMVHYGHSNQLRQARAMGDHLIVGVHTDEEIAKHKGPPVFTQEERYKMVQAIKWVDEVVPAAPYVTTLETLDKYNCDFCVHGNDITLTVDGRDTYEEVKQAGRYRECKRTQGVSTTDLVGRMLLVTKAHHSSQEMSSEYREYADSFGKCPGGRNPWTGVSQFLQTSQKIIQFASGKEPQPGETVIYVAGAFDLFHIGHVDFLEKVYGLAERPYVIAGLHFDQEVNHYKGKNYPIMNLHERTLSVLACRYVSEVVIGAPYSVTAELLDHFKVDLVCHGKTEVVPDKDGSDPYEEPKRRGIFCQVDSGNDLTTDLIVQRIIKNRLEYEARNQKKEAKELAFQEAMRRQEAQPEREIDCDF</sequence>
<reference key="1">
    <citation type="journal article" date="2005" name="BMC Genomics">
        <title>Characterization of 954 bovine full-CDS cDNA sequences.</title>
        <authorList>
            <person name="Harhay G.P."/>
            <person name="Sonstegard T.S."/>
            <person name="Keele J.W."/>
            <person name="Heaton M.P."/>
            <person name="Clawson M.L."/>
            <person name="Snelling W.M."/>
            <person name="Wiedmann R.T."/>
            <person name="Van Tassell C.P."/>
            <person name="Smith T.P.L."/>
        </authorList>
    </citation>
    <scope>NUCLEOTIDE SEQUENCE [LARGE SCALE MRNA]</scope>
</reference>
<keyword id="KW-0444">Lipid biosynthesis</keyword>
<keyword id="KW-0443">Lipid metabolism</keyword>
<keyword id="KW-0548">Nucleotidyltransferase</keyword>
<keyword id="KW-0594">Phospholipid biosynthesis</keyword>
<keyword id="KW-1208">Phospholipid metabolism</keyword>
<keyword id="KW-0597">Phosphoprotein</keyword>
<keyword id="KW-1185">Reference proteome</keyword>
<keyword id="KW-0808">Transferase</keyword>
<evidence type="ECO:0000250" key="1"/>
<evidence type="ECO:0000250" key="2">
    <source>
        <dbReference type="UniProtKB" id="O88637"/>
    </source>
</evidence>
<evidence type="ECO:0000250" key="3">
    <source>
        <dbReference type="UniProtKB" id="Q99447"/>
    </source>
</evidence>
<evidence type="ECO:0000305" key="4"/>
<accession>Q5EA75</accession>
<feature type="chain" id="PRO_0000269914" description="Ethanolamine-phosphate cytidylyltransferase">
    <location>
        <begin position="1"/>
        <end position="389"/>
    </location>
</feature>
<feature type="binding site" evidence="1">
    <location>
        <begin position="221"/>
        <end position="222"/>
    </location>
    <ligand>
        <name>CTP</name>
        <dbReference type="ChEBI" id="CHEBI:37563"/>
    </ligand>
</feature>
<feature type="binding site" evidence="1">
    <location>
        <begin position="229"/>
        <end position="232"/>
    </location>
    <ligand>
        <name>CTP</name>
        <dbReference type="ChEBI" id="CHEBI:37563"/>
    </ligand>
</feature>
<feature type="binding site" evidence="1">
    <location>
        <position position="259"/>
    </location>
    <ligand>
        <name>CTP</name>
        <dbReference type="ChEBI" id="CHEBI:37563"/>
    </ligand>
</feature>
<feature type="binding site" evidence="1">
    <location>
        <begin position="307"/>
        <end position="310"/>
    </location>
    <ligand>
        <name>CTP</name>
        <dbReference type="ChEBI" id="CHEBI:37563"/>
    </ligand>
</feature>
<feature type="binding site" evidence="1">
    <location>
        <begin position="336"/>
        <end position="340"/>
    </location>
    <ligand>
        <name>CTP</name>
        <dbReference type="ChEBI" id="CHEBI:37563"/>
    </ligand>
</feature>
<feature type="modified residue" description="Phosphothreonine" evidence="3">
    <location>
        <position position="341"/>
    </location>
</feature>
<feature type="modified residue" description="Phosphothreonine" evidence="2">
    <location>
        <position position="342"/>
    </location>
</feature>
<dbReference type="EC" id="2.7.7.14" evidence="3"/>
<dbReference type="EMBL" id="BT020694">
    <property type="protein sequence ID" value="AAX08711.1"/>
    <property type="molecule type" value="mRNA"/>
</dbReference>
<dbReference type="RefSeq" id="NP_001030261.1">
    <property type="nucleotide sequence ID" value="NM_001035089.1"/>
</dbReference>
<dbReference type="SMR" id="Q5EA75"/>
<dbReference type="FunCoup" id="Q5EA75">
    <property type="interactions" value="2221"/>
</dbReference>
<dbReference type="STRING" id="9913.ENSBTAP00000070069"/>
<dbReference type="PaxDb" id="9913-ENSBTAP00000002434"/>
<dbReference type="GeneID" id="510274"/>
<dbReference type="KEGG" id="bta:510274"/>
<dbReference type="CTD" id="5833"/>
<dbReference type="eggNOG" id="KOG2803">
    <property type="taxonomic scope" value="Eukaryota"/>
</dbReference>
<dbReference type="HOGENOM" id="CLU_031246_2_2_1"/>
<dbReference type="InParanoid" id="Q5EA75"/>
<dbReference type="OrthoDB" id="40021at2759"/>
<dbReference type="TreeFam" id="TF106337"/>
<dbReference type="UniPathway" id="UPA00558">
    <property type="reaction ID" value="UER00742"/>
</dbReference>
<dbReference type="Proteomes" id="UP000009136">
    <property type="component" value="Unplaced"/>
</dbReference>
<dbReference type="GO" id="GO:0005737">
    <property type="term" value="C:cytoplasm"/>
    <property type="evidence" value="ECO:0000318"/>
    <property type="project" value="GO_Central"/>
</dbReference>
<dbReference type="GO" id="GO:0004306">
    <property type="term" value="F:ethanolamine-phosphate cytidylyltransferase activity"/>
    <property type="evidence" value="ECO:0000250"/>
    <property type="project" value="UniProtKB"/>
</dbReference>
<dbReference type="GO" id="GO:0006646">
    <property type="term" value="P:phosphatidylethanolamine biosynthetic process"/>
    <property type="evidence" value="ECO:0000250"/>
    <property type="project" value="UniProtKB"/>
</dbReference>
<dbReference type="CDD" id="cd02174">
    <property type="entry name" value="CCT"/>
    <property type="match status" value="1"/>
</dbReference>
<dbReference type="CDD" id="cd02173">
    <property type="entry name" value="ECT"/>
    <property type="match status" value="1"/>
</dbReference>
<dbReference type="FunFam" id="3.40.50.620:FF:000088">
    <property type="entry name" value="Ethanolamine-phosphate cytidylyltransferase isoform 2"/>
    <property type="match status" value="1"/>
</dbReference>
<dbReference type="FunFam" id="3.40.50.620:FF:000108">
    <property type="entry name" value="Ethanolamine-phosphate cytidylyltransferase isoform 2"/>
    <property type="match status" value="1"/>
</dbReference>
<dbReference type="Gene3D" id="3.40.50.620">
    <property type="entry name" value="HUPs"/>
    <property type="match status" value="2"/>
</dbReference>
<dbReference type="InterPro" id="IPR041723">
    <property type="entry name" value="CCT"/>
</dbReference>
<dbReference type="InterPro" id="IPR004821">
    <property type="entry name" value="Cyt_trans-like"/>
</dbReference>
<dbReference type="InterPro" id="IPR044608">
    <property type="entry name" value="Ect1/PCYT2"/>
</dbReference>
<dbReference type="InterPro" id="IPR014729">
    <property type="entry name" value="Rossmann-like_a/b/a_fold"/>
</dbReference>
<dbReference type="NCBIfam" id="TIGR00125">
    <property type="entry name" value="cyt_tran_rel"/>
    <property type="match status" value="2"/>
</dbReference>
<dbReference type="PANTHER" id="PTHR45780">
    <property type="entry name" value="ETHANOLAMINE-PHOSPHATE CYTIDYLYLTRANSFERASE"/>
    <property type="match status" value="1"/>
</dbReference>
<dbReference type="PANTHER" id="PTHR45780:SF2">
    <property type="entry name" value="ETHANOLAMINE-PHOSPHATE CYTIDYLYLTRANSFERASE"/>
    <property type="match status" value="1"/>
</dbReference>
<dbReference type="Pfam" id="PF01467">
    <property type="entry name" value="CTP_transf_like"/>
    <property type="match status" value="2"/>
</dbReference>
<dbReference type="SUPFAM" id="SSF52374">
    <property type="entry name" value="Nucleotidylyl transferase"/>
    <property type="match status" value="2"/>
</dbReference>
<organism>
    <name type="scientific">Bos taurus</name>
    <name type="common">Bovine</name>
    <dbReference type="NCBI Taxonomy" id="9913"/>
    <lineage>
        <taxon>Eukaryota</taxon>
        <taxon>Metazoa</taxon>
        <taxon>Chordata</taxon>
        <taxon>Craniata</taxon>
        <taxon>Vertebrata</taxon>
        <taxon>Euteleostomi</taxon>
        <taxon>Mammalia</taxon>
        <taxon>Eutheria</taxon>
        <taxon>Laurasiatheria</taxon>
        <taxon>Artiodactyla</taxon>
        <taxon>Ruminantia</taxon>
        <taxon>Pecora</taxon>
        <taxon>Bovidae</taxon>
        <taxon>Bovinae</taxon>
        <taxon>Bos</taxon>
    </lineage>
</organism>
<protein>
    <recommendedName>
        <fullName>Ethanolamine-phosphate cytidylyltransferase</fullName>
        <ecNumber evidence="3">2.7.7.14</ecNumber>
    </recommendedName>
    <alternativeName>
        <fullName>CTP:phosphoethanolamine cytidylyltransferase</fullName>
    </alternativeName>
    <alternativeName>
        <fullName>Phosphorylethanolamine transferase</fullName>
    </alternativeName>
</protein>
<name>PCY2_BOVIN</name>
<gene>
    <name type="primary">PCYT2</name>
</gene>
<comment type="function">
    <text evidence="3">Ethanolamine-phosphate cytidylyltransferase that catalyzes the second step in the synthesis of phosphatidylethanolamine (PE) from ethanolamine via the CDP-ethanolamine pathway. Phosphatidylethanolamine is a dominant inner-leaflet phospholipid in cell membranes, where it plays a role in membrane function by structurally stabilizing membrane-anchored proteins, and participates in important cellular processes such as cell division, cell fusion, blood coagulation, and apoptosis.</text>
</comment>
<comment type="catalytic activity">
    <reaction evidence="3">
        <text>phosphoethanolamine + CTP + H(+) = CDP-ethanolamine + diphosphate</text>
        <dbReference type="Rhea" id="RHEA:24592"/>
        <dbReference type="ChEBI" id="CHEBI:15378"/>
        <dbReference type="ChEBI" id="CHEBI:33019"/>
        <dbReference type="ChEBI" id="CHEBI:37563"/>
        <dbReference type="ChEBI" id="CHEBI:57876"/>
        <dbReference type="ChEBI" id="CHEBI:58190"/>
        <dbReference type="EC" id="2.7.7.14"/>
    </reaction>
    <physiologicalReaction direction="left-to-right" evidence="3">
        <dbReference type="Rhea" id="RHEA:24593"/>
    </physiologicalReaction>
</comment>
<comment type="pathway">
    <text evidence="3">Phospholipid metabolism; phosphatidylethanolamine biosynthesis; phosphatidylethanolamine from ethanolamine: step 2/3.</text>
</comment>
<comment type="similarity">
    <text evidence="4">Belongs to the cytidylyltransferase family.</text>
</comment>
<proteinExistence type="evidence at transcript level"/>